<accession>P34530</accession>
<accession>F5GU70</accession>
<accession>F5GU71</accession>
<reference key="1">
    <citation type="journal article" date="1994" name="Nature">
        <title>2.2 Mb of contiguous nucleotide sequence from chromosome III of C. elegans.</title>
        <authorList>
            <person name="Wilson R."/>
            <person name="Ainscough R."/>
            <person name="Anderson K."/>
            <person name="Baynes C."/>
            <person name="Berks M."/>
            <person name="Bonfield J."/>
            <person name="Burton J."/>
            <person name="Connell M."/>
            <person name="Copsey T."/>
            <person name="Cooper J."/>
            <person name="Coulson A."/>
            <person name="Craxton M."/>
            <person name="Dear S."/>
            <person name="Du Z."/>
            <person name="Durbin R."/>
            <person name="Favello A."/>
            <person name="Fraser A."/>
            <person name="Fulton L."/>
            <person name="Gardner A."/>
            <person name="Green P."/>
            <person name="Hawkins T."/>
            <person name="Hillier L."/>
            <person name="Jier M."/>
            <person name="Johnston L."/>
            <person name="Jones M."/>
            <person name="Kershaw J."/>
            <person name="Kirsten J."/>
            <person name="Laisster N."/>
            <person name="Latreille P."/>
            <person name="Lightning J."/>
            <person name="Lloyd C."/>
            <person name="Mortimore B."/>
            <person name="O'Callaghan M."/>
            <person name="Parsons J."/>
            <person name="Percy C."/>
            <person name="Rifken L."/>
            <person name="Roopra A."/>
            <person name="Saunders D."/>
            <person name="Shownkeen R."/>
            <person name="Sims M."/>
            <person name="Smaldon N."/>
            <person name="Smith A."/>
            <person name="Smith M."/>
            <person name="Sonnhammer E."/>
            <person name="Staden R."/>
            <person name="Sulston J."/>
            <person name="Thierry-Mieg J."/>
            <person name="Thomas K."/>
            <person name="Vaudin M."/>
            <person name="Vaughan K."/>
            <person name="Waterston R."/>
            <person name="Watson A."/>
            <person name="Weinstock L."/>
            <person name="Wilkinson-Sproat J."/>
            <person name="Wohldman P."/>
        </authorList>
    </citation>
    <scope>NUCLEOTIDE SEQUENCE [LARGE SCALE GENOMIC DNA]</scope>
    <scope>ALTERNATIVE SPLICING</scope>
    <source>
        <strain>Bristol N2</strain>
    </source>
</reference>
<reference key="2">
    <citation type="journal article" date="1998" name="Science">
        <title>Genome sequence of the nematode C. elegans: a platform for investigating biology.</title>
        <authorList>
            <consortium name="The C. elegans sequencing consortium"/>
        </authorList>
    </citation>
    <scope>NUCLEOTIDE SEQUENCE [LARGE SCALE GENOMIC DNA]</scope>
    <scope>ALTERNATIVE SPLICING</scope>
    <source>
        <strain>Bristol N2</strain>
    </source>
</reference>
<organism>
    <name type="scientific">Caenorhabditis elegans</name>
    <dbReference type="NCBI Taxonomy" id="6239"/>
    <lineage>
        <taxon>Eukaryota</taxon>
        <taxon>Metazoa</taxon>
        <taxon>Ecdysozoa</taxon>
        <taxon>Nematoda</taxon>
        <taxon>Chromadorea</taxon>
        <taxon>Rhabditida</taxon>
        <taxon>Rhabditina</taxon>
        <taxon>Rhabditomorpha</taxon>
        <taxon>Rhabditoidea</taxon>
        <taxon>Rhabditidae</taxon>
        <taxon>Peloderinae</taxon>
        <taxon>Caenorhabditis</taxon>
    </lineage>
</organism>
<protein>
    <recommendedName>
        <fullName>Uncharacterized protein M01A8.1</fullName>
    </recommendedName>
</protein>
<name>YM91_CAEEL</name>
<dbReference type="EMBL" id="Z27081">
    <property type="protein sequence ID" value="CAA81606.1"/>
    <property type="molecule type" value="Genomic_DNA"/>
</dbReference>
<dbReference type="EMBL" id="Z27081">
    <property type="protein sequence ID" value="CCA65591.1"/>
    <property type="molecule type" value="Genomic_DNA"/>
</dbReference>
<dbReference type="EMBL" id="Z27081">
    <property type="protein sequence ID" value="CCA65592.1"/>
    <property type="molecule type" value="Genomic_DNA"/>
</dbReference>
<dbReference type="PIR" id="S40997">
    <property type="entry name" value="S40997"/>
</dbReference>
<dbReference type="RefSeq" id="NP_001254982.1">
    <molecule id="P34530-1"/>
    <property type="nucleotide sequence ID" value="NM_001268053.3"/>
</dbReference>
<dbReference type="RefSeq" id="NP_001254983.1">
    <molecule id="P34530-2"/>
    <property type="nucleotide sequence ID" value="NM_001268054.4"/>
</dbReference>
<dbReference type="RefSeq" id="NP_001254984.1">
    <molecule id="P34530-3"/>
    <property type="nucleotide sequence ID" value="NM_001268055.3"/>
</dbReference>
<dbReference type="SMR" id="P34530"/>
<dbReference type="FunCoup" id="P34530">
    <property type="interactions" value="104"/>
</dbReference>
<dbReference type="PaxDb" id="6239-M01A8.1a"/>
<dbReference type="EnsemblMetazoa" id="M01A8.1a.1">
    <molecule id="P34530-1"/>
    <property type="protein sequence ID" value="M01A8.1a.1"/>
    <property type="gene ID" value="WBGene00010795"/>
</dbReference>
<dbReference type="EnsemblMetazoa" id="M01A8.1b.1">
    <molecule id="P34530-2"/>
    <property type="protein sequence ID" value="M01A8.1b.1"/>
    <property type="gene ID" value="WBGene00010795"/>
</dbReference>
<dbReference type="EnsemblMetazoa" id="M01A8.1c.1">
    <molecule id="P34530-3"/>
    <property type="protein sequence ID" value="M01A8.1c.1"/>
    <property type="gene ID" value="WBGene00010795"/>
</dbReference>
<dbReference type="GeneID" id="187349"/>
<dbReference type="KEGG" id="cel:CELE_M01A8.1"/>
<dbReference type="UCSC" id="M01A8.1">
    <molecule id="P34530-1"/>
    <property type="organism name" value="c. elegans"/>
</dbReference>
<dbReference type="AGR" id="WB:WBGene00010795"/>
<dbReference type="CTD" id="187349"/>
<dbReference type="WormBase" id="M01A8.1a">
    <molecule id="P34530-1"/>
    <property type="protein sequence ID" value="CE46034"/>
    <property type="gene ID" value="WBGene00010795"/>
</dbReference>
<dbReference type="WormBase" id="M01A8.1b">
    <molecule id="P34530-2"/>
    <property type="protein sequence ID" value="CE00275"/>
    <property type="gene ID" value="WBGene00010795"/>
</dbReference>
<dbReference type="WormBase" id="M01A8.1c">
    <molecule id="P34530-3"/>
    <property type="protein sequence ID" value="CE45908"/>
    <property type="gene ID" value="WBGene00010795"/>
</dbReference>
<dbReference type="eggNOG" id="ENOG502R9SD">
    <property type="taxonomic scope" value="Eukaryota"/>
</dbReference>
<dbReference type="InParanoid" id="P34530"/>
<dbReference type="OMA" id="QNHAHAC"/>
<dbReference type="OrthoDB" id="5813630at2759"/>
<dbReference type="PRO" id="PR:P34530"/>
<dbReference type="Proteomes" id="UP000001940">
    <property type="component" value="Chromosome III"/>
</dbReference>
<dbReference type="Bgee" id="WBGene00010795">
    <property type="expression patterns" value="Expressed in anatomical system and 4 other cell types or tissues"/>
</dbReference>
<dbReference type="GO" id="GO:0016020">
    <property type="term" value="C:membrane"/>
    <property type="evidence" value="ECO:0007669"/>
    <property type="project" value="UniProtKB-SubCell"/>
</dbReference>
<gene>
    <name type="ORF">M01A8.1</name>
</gene>
<keyword id="KW-0025">Alternative splicing</keyword>
<keyword id="KW-0472">Membrane</keyword>
<keyword id="KW-1185">Reference proteome</keyword>
<keyword id="KW-0812">Transmembrane</keyword>
<keyword id="KW-1133">Transmembrane helix</keyword>
<comment type="subcellular location">
    <subcellularLocation>
        <location evidence="3">Membrane</location>
        <topology evidence="3">Single-pass membrane protein</topology>
    </subcellularLocation>
</comment>
<comment type="alternative products">
    <event type="alternative splicing"/>
    <isoform>
        <id>P34530-1</id>
        <name>a</name>
        <sequence type="displayed"/>
    </isoform>
    <isoform>
        <id>P34530-2</id>
        <name>b</name>
        <sequence type="described" ref="VSP_043959 VSP_043960"/>
    </isoform>
    <isoform>
        <id>P34530-3</id>
        <name>c</name>
        <sequence type="described" ref="VSP_043961"/>
    </isoform>
</comment>
<proteinExistence type="predicted"/>
<evidence type="ECO:0000255" key="1"/>
<evidence type="ECO:0000256" key="2">
    <source>
        <dbReference type="SAM" id="MobiDB-lite"/>
    </source>
</evidence>
<evidence type="ECO:0000305" key="3"/>
<sequence>MSPHKDFQSSSTPVPVCMENDPNCDLLRYLIALAIFIGLIAIFMFGCKAAMRLLTRKRNRDTTQSDTDVIYPRDDPRASRSHQNFGFMDPPPRYEQIFKRGGGTPSVITTREAPSVTRSTGDGSLPPSYEQAALNARRESRPQLPQGTLREVPLTAIDMEHPAMSTPSSTVLDMESEITNITNHAQACVHRYDASHANEVTRTAVAVTTESPAPAQSTSNALPELEAPEGGPPGYDTISLHNETVSTR</sequence>
<feature type="chain" id="PRO_0000418047" description="Uncharacterized protein M01A8.1">
    <location>
        <begin position="1"/>
        <end position="248"/>
    </location>
</feature>
<feature type="transmembrane region" description="Helical" evidence="1">
    <location>
        <begin position="30"/>
        <end position="50"/>
    </location>
</feature>
<feature type="region of interest" description="Disordered" evidence="2">
    <location>
        <begin position="59"/>
        <end position="91"/>
    </location>
</feature>
<feature type="region of interest" description="Disordered" evidence="2">
    <location>
        <begin position="208"/>
        <end position="248"/>
    </location>
</feature>
<feature type="compositionally biased region" description="Polar residues" evidence="2">
    <location>
        <begin position="210"/>
        <end position="220"/>
    </location>
</feature>
<feature type="compositionally biased region" description="Polar residues" evidence="2">
    <location>
        <begin position="239"/>
        <end position="248"/>
    </location>
</feature>
<feature type="splice variant" id="VSP_043961" description="In isoform c." evidence="3">
    <location>
        <begin position="1"/>
        <end position="87"/>
    </location>
</feature>
<feature type="splice variant" id="VSP_043959" description="In isoform b." evidence="3">
    <location>
        <begin position="1"/>
        <end position="45"/>
    </location>
</feature>
<feature type="splice variant" id="VSP_043960" description="In isoform b." evidence="3">
    <original>GCKAAMRLLTRK</original>
    <variation>MCFFLLCFLDSF</variation>
    <location>
        <begin position="46"/>
        <end position="57"/>
    </location>
</feature>